<evidence type="ECO:0000250" key="1"/>
<evidence type="ECO:0000250" key="2">
    <source>
        <dbReference type="UniProtKB" id="Q7Z4N8"/>
    </source>
</evidence>
<evidence type="ECO:0000255" key="3"/>
<evidence type="ECO:0000255" key="4">
    <source>
        <dbReference type="PROSITE-ProRule" id="PRU00805"/>
    </source>
</evidence>
<evidence type="ECO:0000303" key="5">
    <source>
    </source>
</evidence>
<evidence type="ECO:0000303" key="6">
    <source>
    </source>
</evidence>
<evidence type="ECO:0000305" key="7"/>
<reference key="1">
    <citation type="journal article" date="2003" name="J. Biol. Chem.">
        <title>Identification and characterization of a third human, rat, and mouse collagen prolyl 4-hydroxylase isoenzyme.</title>
        <authorList>
            <person name="Kukkola L."/>
            <person name="Hieta R."/>
            <person name="Kivirikko K.I."/>
            <person name="Myllyharju J."/>
        </authorList>
    </citation>
    <scope>NUCLEOTIDE SEQUENCE [MRNA] (ISOFORM 1)</scope>
    <source>
        <strain>Webster</strain>
    </source>
</reference>
<reference key="2">
    <citation type="journal article" date="2005" name="Science">
        <title>The transcriptional landscape of the mammalian genome.</title>
        <authorList>
            <person name="Carninci P."/>
            <person name="Kasukawa T."/>
            <person name="Katayama S."/>
            <person name="Gough J."/>
            <person name="Frith M.C."/>
            <person name="Maeda N."/>
            <person name="Oyama R."/>
            <person name="Ravasi T."/>
            <person name="Lenhard B."/>
            <person name="Wells C."/>
            <person name="Kodzius R."/>
            <person name="Shimokawa K."/>
            <person name="Bajic V.B."/>
            <person name="Brenner S.E."/>
            <person name="Batalov S."/>
            <person name="Forrest A.R."/>
            <person name="Zavolan M."/>
            <person name="Davis M.J."/>
            <person name="Wilming L.G."/>
            <person name="Aidinis V."/>
            <person name="Allen J.E."/>
            <person name="Ambesi-Impiombato A."/>
            <person name="Apweiler R."/>
            <person name="Aturaliya R.N."/>
            <person name="Bailey T.L."/>
            <person name="Bansal M."/>
            <person name="Baxter L."/>
            <person name="Beisel K.W."/>
            <person name="Bersano T."/>
            <person name="Bono H."/>
            <person name="Chalk A.M."/>
            <person name="Chiu K.P."/>
            <person name="Choudhary V."/>
            <person name="Christoffels A."/>
            <person name="Clutterbuck D.R."/>
            <person name="Crowe M.L."/>
            <person name="Dalla E."/>
            <person name="Dalrymple B.P."/>
            <person name="de Bono B."/>
            <person name="Della Gatta G."/>
            <person name="di Bernardo D."/>
            <person name="Down T."/>
            <person name="Engstrom P."/>
            <person name="Fagiolini M."/>
            <person name="Faulkner G."/>
            <person name="Fletcher C.F."/>
            <person name="Fukushima T."/>
            <person name="Furuno M."/>
            <person name="Futaki S."/>
            <person name="Gariboldi M."/>
            <person name="Georgii-Hemming P."/>
            <person name="Gingeras T.R."/>
            <person name="Gojobori T."/>
            <person name="Green R.E."/>
            <person name="Gustincich S."/>
            <person name="Harbers M."/>
            <person name="Hayashi Y."/>
            <person name="Hensch T.K."/>
            <person name="Hirokawa N."/>
            <person name="Hill D."/>
            <person name="Huminiecki L."/>
            <person name="Iacono M."/>
            <person name="Ikeo K."/>
            <person name="Iwama A."/>
            <person name="Ishikawa T."/>
            <person name="Jakt M."/>
            <person name="Kanapin A."/>
            <person name="Katoh M."/>
            <person name="Kawasawa Y."/>
            <person name="Kelso J."/>
            <person name="Kitamura H."/>
            <person name="Kitano H."/>
            <person name="Kollias G."/>
            <person name="Krishnan S.P."/>
            <person name="Kruger A."/>
            <person name="Kummerfeld S.K."/>
            <person name="Kurochkin I.V."/>
            <person name="Lareau L.F."/>
            <person name="Lazarevic D."/>
            <person name="Lipovich L."/>
            <person name="Liu J."/>
            <person name="Liuni S."/>
            <person name="McWilliam S."/>
            <person name="Madan Babu M."/>
            <person name="Madera M."/>
            <person name="Marchionni L."/>
            <person name="Matsuda H."/>
            <person name="Matsuzawa S."/>
            <person name="Miki H."/>
            <person name="Mignone F."/>
            <person name="Miyake S."/>
            <person name="Morris K."/>
            <person name="Mottagui-Tabar S."/>
            <person name="Mulder N."/>
            <person name="Nakano N."/>
            <person name="Nakauchi H."/>
            <person name="Ng P."/>
            <person name="Nilsson R."/>
            <person name="Nishiguchi S."/>
            <person name="Nishikawa S."/>
            <person name="Nori F."/>
            <person name="Ohara O."/>
            <person name="Okazaki Y."/>
            <person name="Orlando V."/>
            <person name="Pang K.C."/>
            <person name="Pavan W.J."/>
            <person name="Pavesi G."/>
            <person name="Pesole G."/>
            <person name="Petrovsky N."/>
            <person name="Piazza S."/>
            <person name="Reed J."/>
            <person name="Reid J.F."/>
            <person name="Ring B.Z."/>
            <person name="Ringwald M."/>
            <person name="Rost B."/>
            <person name="Ruan Y."/>
            <person name="Salzberg S.L."/>
            <person name="Sandelin A."/>
            <person name="Schneider C."/>
            <person name="Schoenbach C."/>
            <person name="Sekiguchi K."/>
            <person name="Semple C.A."/>
            <person name="Seno S."/>
            <person name="Sessa L."/>
            <person name="Sheng Y."/>
            <person name="Shibata Y."/>
            <person name="Shimada H."/>
            <person name="Shimada K."/>
            <person name="Silva D."/>
            <person name="Sinclair B."/>
            <person name="Sperling S."/>
            <person name="Stupka E."/>
            <person name="Sugiura K."/>
            <person name="Sultana R."/>
            <person name="Takenaka Y."/>
            <person name="Taki K."/>
            <person name="Tammoja K."/>
            <person name="Tan S.L."/>
            <person name="Tang S."/>
            <person name="Taylor M.S."/>
            <person name="Tegner J."/>
            <person name="Teichmann S.A."/>
            <person name="Ueda H.R."/>
            <person name="van Nimwegen E."/>
            <person name="Verardo R."/>
            <person name="Wei C.L."/>
            <person name="Yagi K."/>
            <person name="Yamanishi H."/>
            <person name="Zabarovsky E."/>
            <person name="Zhu S."/>
            <person name="Zimmer A."/>
            <person name="Hide W."/>
            <person name="Bult C."/>
            <person name="Grimmond S.M."/>
            <person name="Teasdale R.D."/>
            <person name="Liu E.T."/>
            <person name="Brusic V."/>
            <person name="Quackenbush J."/>
            <person name="Wahlestedt C."/>
            <person name="Mattick J.S."/>
            <person name="Hume D.A."/>
            <person name="Kai C."/>
            <person name="Sasaki D."/>
            <person name="Tomaru Y."/>
            <person name="Fukuda S."/>
            <person name="Kanamori-Katayama M."/>
            <person name="Suzuki M."/>
            <person name="Aoki J."/>
            <person name="Arakawa T."/>
            <person name="Iida J."/>
            <person name="Imamura K."/>
            <person name="Itoh M."/>
            <person name="Kato T."/>
            <person name="Kawaji H."/>
            <person name="Kawagashira N."/>
            <person name="Kawashima T."/>
            <person name="Kojima M."/>
            <person name="Kondo S."/>
            <person name="Konno H."/>
            <person name="Nakano K."/>
            <person name="Ninomiya N."/>
            <person name="Nishio T."/>
            <person name="Okada M."/>
            <person name="Plessy C."/>
            <person name="Shibata K."/>
            <person name="Shiraki T."/>
            <person name="Suzuki S."/>
            <person name="Tagami M."/>
            <person name="Waki K."/>
            <person name="Watahiki A."/>
            <person name="Okamura-Oho Y."/>
            <person name="Suzuki H."/>
            <person name="Kawai J."/>
            <person name="Hayashizaki Y."/>
        </authorList>
    </citation>
    <scope>NUCLEOTIDE SEQUENCE [LARGE SCALE MRNA] (ISOFORM 3)</scope>
    <source>
        <strain>C57BL/6J</strain>
        <tissue>Head</tissue>
    </source>
</reference>
<reference key="3">
    <citation type="journal article" date="2004" name="Genome Res.">
        <title>The status, quality, and expansion of the NIH full-length cDNA project: the Mammalian Gene Collection (MGC).</title>
        <authorList>
            <consortium name="The MGC Project Team"/>
        </authorList>
    </citation>
    <scope>NUCLEOTIDE SEQUENCE [LARGE SCALE MRNA] (ISOFORM 2)</scope>
    <source>
        <strain>C57BL/6J</strain>
        <tissue>Brain</tissue>
    </source>
</reference>
<organism>
    <name type="scientific">Mus musculus</name>
    <name type="common">Mouse</name>
    <dbReference type="NCBI Taxonomy" id="10090"/>
    <lineage>
        <taxon>Eukaryota</taxon>
        <taxon>Metazoa</taxon>
        <taxon>Chordata</taxon>
        <taxon>Craniata</taxon>
        <taxon>Vertebrata</taxon>
        <taxon>Euteleostomi</taxon>
        <taxon>Mammalia</taxon>
        <taxon>Eutheria</taxon>
        <taxon>Euarchontoglires</taxon>
        <taxon>Glires</taxon>
        <taxon>Rodentia</taxon>
        <taxon>Myomorpha</taxon>
        <taxon>Muroidea</taxon>
        <taxon>Muridae</taxon>
        <taxon>Murinae</taxon>
        <taxon>Mus</taxon>
        <taxon>Mus</taxon>
    </lineage>
</organism>
<comment type="function">
    <text evidence="2">Catalyzes the post-translational formation of 4-hydroxyproline in -Xaa-Pro-Gly- sequences in collagens and other proteins.</text>
</comment>
<comment type="catalytic activity">
    <reaction evidence="2">
        <text>L-prolyl-[collagen] + 2-oxoglutarate + O2 = trans-4-hydroxy-L-prolyl-[collagen] + succinate + CO2</text>
        <dbReference type="Rhea" id="RHEA:18945"/>
        <dbReference type="Rhea" id="RHEA-COMP:11676"/>
        <dbReference type="Rhea" id="RHEA-COMP:11680"/>
        <dbReference type="ChEBI" id="CHEBI:15379"/>
        <dbReference type="ChEBI" id="CHEBI:16526"/>
        <dbReference type="ChEBI" id="CHEBI:16810"/>
        <dbReference type="ChEBI" id="CHEBI:30031"/>
        <dbReference type="ChEBI" id="CHEBI:50342"/>
        <dbReference type="ChEBI" id="CHEBI:61965"/>
        <dbReference type="EC" id="1.14.11.2"/>
    </reaction>
    <physiologicalReaction direction="left-to-right" evidence="2">
        <dbReference type="Rhea" id="RHEA:18946"/>
    </physiologicalReaction>
</comment>
<comment type="cofactor">
    <cofactor evidence="2">
        <name>Fe(2+)</name>
        <dbReference type="ChEBI" id="CHEBI:29033"/>
    </cofactor>
    <text evidence="2">Binds 1 Fe(2+) ion per subunit.</text>
</comment>
<comment type="cofactor">
    <cofactor evidence="2">
        <name>L-ascorbate</name>
        <dbReference type="ChEBI" id="CHEBI:38290"/>
    </cofactor>
</comment>
<comment type="subunit">
    <text evidence="2">Heterotetramer of two alpha-3 chains and two beta chains (the beta chain is the multi-functional PDI).</text>
</comment>
<comment type="subcellular location">
    <subcellularLocation>
        <location evidence="1">Endoplasmic reticulum lumen</location>
    </subcellularLocation>
</comment>
<comment type="alternative products">
    <event type="alternative splicing"/>
    <isoform>
        <id>Q6W3F0-1</id>
        <name>1</name>
        <sequence type="displayed"/>
    </isoform>
    <isoform>
        <id>Q6W3F0-2</id>
        <name>2</name>
        <sequence type="described" ref="VSP_031148"/>
    </isoform>
    <isoform>
        <id>Q6W3F0-3</id>
        <name>3</name>
        <sequence type="described" ref="VSP_031148 VSP_031149"/>
    </isoform>
</comment>
<comment type="PTM">
    <text evidence="1">N-glycosylation plays no role in the catalytic activity.</text>
</comment>
<comment type="similarity">
    <text evidence="7">Belongs to the P4HA family.</text>
</comment>
<sequence>MGPGARLALLALLALGGDPAAATGREDTFSALTSVARALAPERRLLGTLRRYLRGEEARLRDLTRFYDKVLSLHEDLKIPVVNPLLAFTVIKRLQSDWRNVVHSLEATENIRALKDGYEKVEQDLPAFEDLEGAARALMRLQDVYMLNVKGLARGVFQRVTGSSITDLYSPRQLFSLTADDCFQVGKVAYDTGDYYHAIPWLEEAVSLFRRAHGEWKTEDEASLEDALDYLAFACFQVGNVSCALSLSREFLVYSPDNKRMARNVLKYERLLAENGHQMAAETAIQRPNVPHLQTRDTYEGLCQTLGSQPTHYQIPSLYCSYETNSSPYLLLQPARKEVVHLRPLIALYHDFVSDEEAQKIRELAEPWLQRSVVASGEKQLQVEYRISKSAWLKDTVDPMLVTLDHRIAALTGLDIQPPYAEYLQVVNYGIGGHYEPHFDHATSPSSPLYRMKSGNRVATFMIYLSSVEAGGATAFIYGNFSVPVVKNAALFWWNLHRSGEGDGDTLHAGCPVLVGDKWVANKWIHEYGQEFRRPCSTNPED</sequence>
<name>P4HA3_MOUSE</name>
<keyword id="KW-0025">Alternative splicing</keyword>
<keyword id="KW-0175">Coiled coil</keyword>
<keyword id="KW-0223">Dioxygenase</keyword>
<keyword id="KW-0256">Endoplasmic reticulum</keyword>
<keyword id="KW-0325">Glycoprotein</keyword>
<keyword id="KW-0408">Iron</keyword>
<keyword id="KW-0479">Metal-binding</keyword>
<keyword id="KW-0560">Oxidoreductase</keyword>
<keyword id="KW-1185">Reference proteome</keyword>
<keyword id="KW-0732">Signal</keyword>
<keyword id="KW-0802">TPR repeat</keyword>
<keyword id="KW-0847">Vitamin C</keyword>
<proteinExistence type="evidence at transcript level"/>
<gene>
    <name type="primary">P4ha3</name>
</gene>
<feature type="signal peptide" evidence="3">
    <location>
        <begin position="1"/>
        <end position="24"/>
    </location>
</feature>
<feature type="chain" id="PRO_0000317767" description="Prolyl 4-hydroxylase subunit alpha-3">
    <location>
        <begin position="25"/>
        <end position="542"/>
    </location>
</feature>
<feature type="repeat" description="TPR">
    <location>
        <begin position="225"/>
        <end position="258"/>
    </location>
</feature>
<feature type="domain" description="Fe2OG dioxygenase" evidence="4">
    <location>
        <begin position="420"/>
        <end position="527"/>
    </location>
</feature>
<feature type="coiled-coil region" evidence="3">
    <location>
        <begin position="105"/>
        <end position="129"/>
    </location>
</feature>
<feature type="binding site" evidence="4">
    <location>
        <position position="438"/>
    </location>
    <ligand>
        <name>Fe cation</name>
        <dbReference type="ChEBI" id="CHEBI:24875"/>
    </ligand>
</feature>
<feature type="binding site" evidence="4">
    <location>
        <position position="440"/>
    </location>
    <ligand>
        <name>Fe cation</name>
        <dbReference type="ChEBI" id="CHEBI:24875"/>
    </ligand>
</feature>
<feature type="binding site" evidence="4">
    <location>
        <position position="508"/>
    </location>
    <ligand>
        <name>Fe cation</name>
        <dbReference type="ChEBI" id="CHEBI:24875"/>
    </ligand>
</feature>
<feature type="binding site" evidence="4">
    <location>
        <position position="518"/>
    </location>
    <ligand>
        <name>2-oxoglutarate</name>
        <dbReference type="ChEBI" id="CHEBI:16810"/>
    </ligand>
</feature>
<feature type="glycosylation site" description="N-linked (GlcNAc...) asparagine" evidence="3">
    <location>
        <position position="240"/>
    </location>
</feature>
<feature type="glycosylation site" description="N-linked (GlcNAc...) asparagine" evidence="3">
    <location>
        <position position="480"/>
    </location>
</feature>
<feature type="splice variant" id="VSP_031148" description="In isoform 2 and isoform 3." evidence="5 6">
    <location>
        <begin position="1"/>
        <end position="138"/>
    </location>
</feature>
<feature type="splice variant" id="VSP_031149" description="In isoform 3." evidence="6">
    <location>
        <begin position="444"/>
        <end position="464"/>
    </location>
</feature>
<dbReference type="EC" id="1.14.11.2" evidence="2"/>
<dbReference type="EMBL" id="AY313449">
    <property type="protein sequence ID" value="AAQ87604.1"/>
    <property type="molecule type" value="mRNA"/>
</dbReference>
<dbReference type="EMBL" id="AK086468">
    <property type="protein sequence ID" value="BAC39675.1"/>
    <property type="molecule type" value="mRNA"/>
</dbReference>
<dbReference type="EMBL" id="BC082538">
    <property type="protein sequence ID" value="AAH82538.1"/>
    <property type="molecule type" value="mRNA"/>
</dbReference>
<dbReference type="CCDS" id="CCDS21496.1">
    <molecule id="Q6W3F0-1"/>
</dbReference>
<dbReference type="SMR" id="Q6W3F0"/>
<dbReference type="FunCoup" id="Q6W3F0">
    <property type="interactions" value="382"/>
</dbReference>
<dbReference type="STRING" id="10090.ENSMUSP00000055297"/>
<dbReference type="GlyCosmos" id="Q6W3F0">
    <property type="glycosylation" value="2 sites, No reported glycans"/>
</dbReference>
<dbReference type="GlyGen" id="Q6W3F0">
    <property type="glycosylation" value="2 sites"/>
</dbReference>
<dbReference type="iPTMnet" id="Q6W3F0"/>
<dbReference type="PhosphoSitePlus" id="Q6W3F0"/>
<dbReference type="PaxDb" id="10090-ENSMUSP00000055297"/>
<dbReference type="PeptideAtlas" id="Q6W3F0"/>
<dbReference type="ProteomicsDB" id="294362">
    <molecule id="Q6W3F0-1"/>
</dbReference>
<dbReference type="ProteomicsDB" id="294363">
    <molecule id="Q6W3F0-2"/>
</dbReference>
<dbReference type="ProteomicsDB" id="294364">
    <molecule id="Q6W3F0-3"/>
</dbReference>
<dbReference type="Pumba" id="Q6W3F0"/>
<dbReference type="UCSC" id="uc012fqc.1">
    <molecule id="Q6W3F0-3"/>
    <property type="organism name" value="mouse"/>
</dbReference>
<dbReference type="AGR" id="MGI:2444049"/>
<dbReference type="MGI" id="MGI:2444049">
    <property type="gene designation" value="P4ha3"/>
</dbReference>
<dbReference type="eggNOG" id="KOG1591">
    <property type="taxonomic scope" value="Eukaryota"/>
</dbReference>
<dbReference type="InParanoid" id="Q6W3F0"/>
<dbReference type="PhylomeDB" id="Q6W3F0"/>
<dbReference type="BRENDA" id="1.14.11.2">
    <property type="organism ID" value="3474"/>
</dbReference>
<dbReference type="Reactome" id="R-MMU-1650814">
    <property type="pathway name" value="Collagen biosynthesis and modifying enzymes"/>
</dbReference>
<dbReference type="ChiTaRS" id="P4ha3">
    <property type="organism name" value="mouse"/>
</dbReference>
<dbReference type="PRO" id="PR:Q6W3F0"/>
<dbReference type="Proteomes" id="UP000000589">
    <property type="component" value="Unplaced"/>
</dbReference>
<dbReference type="RNAct" id="Q6W3F0">
    <property type="molecule type" value="protein"/>
</dbReference>
<dbReference type="GO" id="GO:0005788">
    <property type="term" value="C:endoplasmic reticulum lumen"/>
    <property type="evidence" value="ECO:0007669"/>
    <property type="project" value="UniProtKB-SubCell"/>
</dbReference>
<dbReference type="GO" id="GO:0005506">
    <property type="term" value="F:iron ion binding"/>
    <property type="evidence" value="ECO:0007669"/>
    <property type="project" value="InterPro"/>
</dbReference>
<dbReference type="GO" id="GO:0031418">
    <property type="term" value="F:L-ascorbic acid binding"/>
    <property type="evidence" value="ECO:0007669"/>
    <property type="project" value="UniProtKB-KW"/>
</dbReference>
<dbReference type="GO" id="GO:0004656">
    <property type="term" value="F:procollagen-proline 4-dioxygenase activity"/>
    <property type="evidence" value="ECO:0007669"/>
    <property type="project" value="UniProtKB-EC"/>
</dbReference>
<dbReference type="FunFam" id="2.60.120.620:FF:000013">
    <property type="entry name" value="Prolyl 4-hydroxylase subunit alpha 3"/>
    <property type="match status" value="1"/>
</dbReference>
<dbReference type="FunFam" id="1.25.40.10:FF:000161">
    <property type="entry name" value="prolyl 4-hydroxylase subunit alpha-3 isoform X1"/>
    <property type="match status" value="1"/>
</dbReference>
<dbReference type="Gene3D" id="6.10.140.1460">
    <property type="match status" value="1"/>
</dbReference>
<dbReference type="Gene3D" id="2.60.120.620">
    <property type="entry name" value="q2cbj1_9rhob like domain"/>
    <property type="match status" value="1"/>
</dbReference>
<dbReference type="Gene3D" id="1.25.40.10">
    <property type="entry name" value="Tetratricopeptide repeat domain"/>
    <property type="match status" value="1"/>
</dbReference>
<dbReference type="InterPro" id="IPR005123">
    <property type="entry name" value="Oxoglu/Fe-dep_dioxygenase_dom"/>
</dbReference>
<dbReference type="InterPro" id="IPR045054">
    <property type="entry name" value="P4HA-like"/>
</dbReference>
<dbReference type="InterPro" id="IPR006620">
    <property type="entry name" value="Pro_4_hyd_alph"/>
</dbReference>
<dbReference type="InterPro" id="IPR044862">
    <property type="entry name" value="Pro_4_hyd_alph_FE2OG_OXY"/>
</dbReference>
<dbReference type="InterPro" id="IPR013547">
    <property type="entry name" value="Pro_4_hyd_alph_N"/>
</dbReference>
<dbReference type="InterPro" id="IPR011990">
    <property type="entry name" value="TPR-like_helical_dom_sf"/>
</dbReference>
<dbReference type="PANTHER" id="PTHR10869">
    <property type="entry name" value="PROLYL 4-HYDROXYLASE ALPHA SUBUNIT"/>
    <property type="match status" value="1"/>
</dbReference>
<dbReference type="PANTHER" id="PTHR10869:SF223">
    <property type="entry name" value="PROLYL 4-HYDROXYLASE SUBUNIT ALPHA-3"/>
    <property type="match status" value="1"/>
</dbReference>
<dbReference type="Pfam" id="PF13640">
    <property type="entry name" value="2OG-FeII_Oxy_3"/>
    <property type="match status" value="1"/>
</dbReference>
<dbReference type="Pfam" id="PF08336">
    <property type="entry name" value="P4Ha_N"/>
    <property type="match status" value="1"/>
</dbReference>
<dbReference type="Pfam" id="PF23558">
    <property type="entry name" value="TPR_P4H"/>
    <property type="match status" value="1"/>
</dbReference>
<dbReference type="SMART" id="SM00702">
    <property type="entry name" value="P4Hc"/>
    <property type="match status" value="1"/>
</dbReference>
<dbReference type="SUPFAM" id="SSF48452">
    <property type="entry name" value="TPR-like"/>
    <property type="match status" value="1"/>
</dbReference>
<dbReference type="PROSITE" id="PS51471">
    <property type="entry name" value="FE2OG_OXY"/>
    <property type="match status" value="1"/>
</dbReference>
<protein>
    <recommendedName>
        <fullName>Prolyl 4-hydroxylase subunit alpha-3</fullName>
        <shortName>4-PH alpha-3</shortName>
        <ecNumber evidence="2">1.14.11.2</ecNumber>
    </recommendedName>
    <alternativeName>
        <fullName>Procollagen-proline,2-oxoglutarate-4-dioxygenase subunit alpha-3</fullName>
    </alternativeName>
</protein>
<accession>Q6W3F0</accession>
<accession>Q640R2</accession>
<accession>Q8C3A6</accession>